<keyword id="KW-0998">Cell outer membrane</keyword>
<keyword id="KW-0961">Cell wall biogenesis/degradation</keyword>
<keyword id="KW-0449">Lipoprotein</keyword>
<keyword id="KW-0456">Lyase</keyword>
<keyword id="KW-0472">Membrane</keyword>
<keyword id="KW-0564">Palmitate</keyword>
<keyword id="KW-0732">Signal</keyword>
<proteinExistence type="inferred from homology"/>
<evidence type="ECO:0000255" key="1">
    <source>
        <dbReference type="HAMAP-Rule" id="MF_01616"/>
    </source>
</evidence>
<dbReference type="EC" id="4.2.2.n1" evidence="1"/>
<dbReference type="EMBL" id="CP001048">
    <property type="protein sequence ID" value="ACC90315.1"/>
    <property type="molecule type" value="Genomic_DNA"/>
</dbReference>
<dbReference type="RefSeq" id="WP_002209995.1">
    <property type="nucleotide sequence ID" value="NZ_CP009780.1"/>
</dbReference>
<dbReference type="SMR" id="B2K0V2"/>
<dbReference type="CAZy" id="GH23">
    <property type="family name" value="Glycoside Hydrolase Family 23"/>
</dbReference>
<dbReference type="GeneID" id="57973687"/>
<dbReference type="KEGG" id="ypb:YPTS_3360"/>
<dbReference type="PATRIC" id="fig|502801.10.peg.2800"/>
<dbReference type="GO" id="GO:0009279">
    <property type="term" value="C:cell outer membrane"/>
    <property type="evidence" value="ECO:0007669"/>
    <property type="project" value="UniProtKB-SubCell"/>
</dbReference>
<dbReference type="GO" id="GO:0016798">
    <property type="term" value="F:hydrolase activity, acting on glycosyl bonds"/>
    <property type="evidence" value="ECO:0007669"/>
    <property type="project" value="InterPro"/>
</dbReference>
<dbReference type="GO" id="GO:0008933">
    <property type="term" value="F:peptidoglycan lytic transglycosylase activity"/>
    <property type="evidence" value="ECO:0007669"/>
    <property type="project" value="UniProtKB-UniRule"/>
</dbReference>
<dbReference type="GO" id="GO:0016998">
    <property type="term" value="P:cell wall macromolecule catabolic process"/>
    <property type="evidence" value="ECO:0007669"/>
    <property type="project" value="UniProtKB-UniRule"/>
</dbReference>
<dbReference type="GO" id="GO:0071555">
    <property type="term" value="P:cell wall organization"/>
    <property type="evidence" value="ECO:0007669"/>
    <property type="project" value="UniProtKB-KW"/>
</dbReference>
<dbReference type="GO" id="GO:0000270">
    <property type="term" value="P:peptidoglycan metabolic process"/>
    <property type="evidence" value="ECO:0007669"/>
    <property type="project" value="InterPro"/>
</dbReference>
<dbReference type="CDD" id="cd16893">
    <property type="entry name" value="LT_MltC_MltE"/>
    <property type="match status" value="1"/>
</dbReference>
<dbReference type="FunFam" id="1.10.530.10:FF:000002">
    <property type="entry name" value="Membrane-bound lytic murein transglycosylase C"/>
    <property type="match status" value="1"/>
</dbReference>
<dbReference type="Gene3D" id="1.10.530.10">
    <property type="match status" value="1"/>
</dbReference>
<dbReference type="HAMAP" id="MF_01616">
    <property type="entry name" value="MltC"/>
    <property type="match status" value="1"/>
</dbReference>
<dbReference type="InterPro" id="IPR023346">
    <property type="entry name" value="Lysozyme-like_dom_sf"/>
</dbReference>
<dbReference type="InterPro" id="IPR023664">
    <property type="entry name" value="Murein_transglycosylaseC"/>
</dbReference>
<dbReference type="InterPro" id="IPR024570">
    <property type="entry name" value="Murein_transglycosylaseC_N"/>
</dbReference>
<dbReference type="InterPro" id="IPR000189">
    <property type="entry name" value="Transglyc_AS"/>
</dbReference>
<dbReference type="InterPro" id="IPR008258">
    <property type="entry name" value="Transglycosylase_SLT_dom_1"/>
</dbReference>
<dbReference type="NCBIfam" id="NF008670">
    <property type="entry name" value="PRK11671.1"/>
    <property type="match status" value="1"/>
</dbReference>
<dbReference type="PANTHER" id="PTHR37423:SF2">
    <property type="entry name" value="MEMBRANE-BOUND LYTIC MUREIN TRANSGLYCOSYLASE C"/>
    <property type="match status" value="1"/>
</dbReference>
<dbReference type="PANTHER" id="PTHR37423">
    <property type="entry name" value="SOLUBLE LYTIC MUREIN TRANSGLYCOSYLASE-RELATED"/>
    <property type="match status" value="1"/>
</dbReference>
<dbReference type="Pfam" id="PF11873">
    <property type="entry name" value="Mltc_N"/>
    <property type="match status" value="1"/>
</dbReference>
<dbReference type="Pfam" id="PF01464">
    <property type="entry name" value="SLT"/>
    <property type="match status" value="1"/>
</dbReference>
<dbReference type="SUPFAM" id="SSF53955">
    <property type="entry name" value="Lysozyme-like"/>
    <property type="match status" value="1"/>
</dbReference>
<dbReference type="PROSITE" id="PS51257">
    <property type="entry name" value="PROKAR_LIPOPROTEIN"/>
    <property type="match status" value="1"/>
</dbReference>
<dbReference type="PROSITE" id="PS00922">
    <property type="entry name" value="TRANSGLYCOSYLASE"/>
    <property type="match status" value="1"/>
</dbReference>
<protein>
    <recommendedName>
        <fullName evidence="1">Membrane-bound lytic murein transglycosylase C</fullName>
        <ecNumber evidence="1">4.2.2.n1</ecNumber>
    </recommendedName>
    <alternativeName>
        <fullName evidence="1">Murein lyase C</fullName>
    </alternativeName>
</protein>
<comment type="function">
    <text evidence="1">Murein-degrading enzyme. May play a role in recycling of muropeptides during cell elongation and/or cell division.</text>
</comment>
<comment type="catalytic activity">
    <reaction evidence="1">
        <text>Exolytic cleavage of the (1-&gt;4)-beta-glycosidic linkage between N-acetylmuramic acid (MurNAc) and N-acetylglucosamine (GlcNAc) residues in peptidoglycan, from either the reducing or the non-reducing ends of the peptidoglycan chains, with concomitant formation of a 1,6-anhydrobond in the MurNAc residue.</text>
        <dbReference type="EC" id="4.2.2.n1"/>
    </reaction>
</comment>
<comment type="subcellular location">
    <subcellularLocation>
        <location evidence="1">Cell outer membrane</location>
        <topology evidence="1">Lipid-anchor</topology>
    </subcellularLocation>
</comment>
<comment type="similarity">
    <text evidence="1">Belongs to the transglycosylase Slt family.</text>
</comment>
<name>MLTC_YERPB</name>
<gene>
    <name evidence="1" type="primary">mltC</name>
    <name type="ordered locus">YPTS_3360</name>
</gene>
<feature type="signal peptide" evidence="1">
    <location>
        <begin position="1"/>
        <end position="16"/>
    </location>
</feature>
<feature type="chain" id="PRO_1000185932" description="Membrane-bound lytic murein transglycosylase C">
    <location>
        <begin position="17"/>
        <end position="358"/>
    </location>
</feature>
<feature type="lipid moiety-binding region" description="N-palmitoyl cysteine" evidence="1">
    <location>
        <position position="17"/>
    </location>
</feature>
<feature type="lipid moiety-binding region" description="S-diacylglycerol cysteine" evidence="1">
    <location>
        <position position="17"/>
    </location>
</feature>
<sequence>MKKILALLVIAPLLVSCSGNKNQVENEVFVKDTNGFEILMGQFAHNIENIWGLKEVLIAGPKDYVKYTDQYQTRSHINFDAGTITIETIATTNPAAHLRQAIITTLLMGDDPGSIDLYSDVNDIQISKEPFLYGQVLDNNGEPIRWEWRAAHFADYLLQNKMQTRTSGLHVISFVTIQLVPNHLDKRAHKYLPLVRKSAARYGVEESLILAIMQTESSFNPYAVSRSDALGLMQVVQHTAGKDVFKLKGKSGQPSRSYLFDPENNIDAGTAYLSILQNTYLGGIQNATSRRYAVITSYNGGAGSVLRVFHSDKNKAVGIINTMSPGDVFQTLTTKHPSGESRRYLVKVNSAQKNYRRY</sequence>
<accession>B2K0V2</accession>
<organism>
    <name type="scientific">Yersinia pseudotuberculosis serotype IB (strain PB1/+)</name>
    <dbReference type="NCBI Taxonomy" id="502801"/>
    <lineage>
        <taxon>Bacteria</taxon>
        <taxon>Pseudomonadati</taxon>
        <taxon>Pseudomonadota</taxon>
        <taxon>Gammaproteobacteria</taxon>
        <taxon>Enterobacterales</taxon>
        <taxon>Yersiniaceae</taxon>
        <taxon>Yersinia</taxon>
    </lineage>
</organism>
<reference key="1">
    <citation type="submission" date="2008-04" db="EMBL/GenBank/DDBJ databases">
        <title>Complete sequence of Yersinia pseudotuberculosis PB1/+.</title>
        <authorList>
            <person name="Copeland A."/>
            <person name="Lucas S."/>
            <person name="Lapidus A."/>
            <person name="Glavina del Rio T."/>
            <person name="Dalin E."/>
            <person name="Tice H."/>
            <person name="Bruce D."/>
            <person name="Goodwin L."/>
            <person name="Pitluck S."/>
            <person name="Munk A.C."/>
            <person name="Brettin T."/>
            <person name="Detter J.C."/>
            <person name="Han C."/>
            <person name="Tapia R."/>
            <person name="Schmutz J."/>
            <person name="Larimer F."/>
            <person name="Land M."/>
            <person name="Hauser L."/>
            <person name="Challacombe J.F."/>
            <person name="Green L."/>
            <person name="Lindler L.E."/>
            <person name="Nikolich M.P."/>
            <person name="Richardson P."/>
        </authorList>
    </citation>
    <scope>NUCLEOTIDE SEQUENCE [LARGE SCALE GENOMIC DNA]</scope>
    <source>
        <strain>PB1/+</strain>
    </source>
</reference>